<keyword id="KW-0067">ATP-binding</keyword>
<keyword id="KW-0997">Cell inner membrane</keyword>
<keyword id="KW-1003">Cell membrane</keyword>
<keyword id="KW-0406">Ion transport</keyword>
<keyword id="KW-0472">Membrane</keyword>
<keyword id="KW-0533">Nickel</keyword>
<keyword id="KW-0921">Nickel transport</keyword>
<keyword id="KW-0547">Nucleotide-binding</keyword>
<keyword id="KW-1278">Translocase</keyword>
<keyword id="KW-0813">Transport</keyword>
<reference key="1">
    <citation type="journal article" date="2005" name="J. Bacteriol.">
        <title>Completion of the genome sequence of Brucella abortus and comparison to the highly similar genomes of Brucella melitensis and Brucella suis.</title>
        <authorList>
            <person name="Halling S.M."/>
            <person name="Peterson-Burch B.D."/>
            <person name="Bricker B.J."/>
            <person name="Zuerner R.L."/>
            <person name="Qing Z."/>
            <person name="Li L.-L."/>
            <person name="Kapur V."/>
            <person name="Alt D.P."/>
            <person name="Olsen S.C."/>
        </authorList>
    </citation>
    <scope>NUCLEOTIDE SEQUENCE [LARGE SCALE GENOMIC DNA]</scope>
    <source>
        <strain>9-941</strain>
    </source>
</reference>
<sequence>MSLISADNIVKIYQSHSLVGASARKTMLHDISISIGQGETVALLGRSGCGKSTLARLLVGLERPTSGEVRFRGVPLTKLDRSGMKAFRREVQLIFQDSPGAVNARSSVRAIIGEPLRHLTSLDETRREERIQELLRLVELPPEIADRLPAQVSGGQLQRICIARALAVNPKLIILDEAVSNLDIHLQASALALLTKLQQEGGIAYLFVTHDLRLVQKFAARCLVMDEGQIVEEIKTADLDSMRHPASRLLREAVLPPLPVRAVETN</sequence>
<comment type="function">
    <text evidence="1">Part of the ABC transporter complex NikABCDE involved in nickel import. Responsible for energy coupling to the transport system.</text>
</comment>
<comment type="catalytic activity">
    <reaction evidence="1">
        <text>Ni(2+)(out) + ATP + H2O = Ni(2+)(in) + ADP + phosphate + H(+)</text>
        <dbReference type="Rhea" id="RHEA:15557"/>
        <dbReference type="ChEBI" id="CHEBI:15377"/>
        <dbReference type="ChEBI" id="CHEBI:15378"/>
        <dbReference type="ChEBI" id="CHEBI:30616"/>
        <dbReference type="ChEBI" id="CHEBI:43474"/>
        <dbReference type="ChEBI" id="CHEBI:49786"/>
        <dbReference type="ChEBI" id="CHEBI:456216"/>
        <dbReference type="EC" id="7.2.2.11"/>
    </reaction>
</comment>
<comment type="subunit">
    <text evidence="1">The complex is composed of two ATP-binding proteins (NikD and NikE), two transmembrane proteins (NikB and NikC) and a solute-binding protein (NikA).</text>
</comment>
<comment type="subcellular location">
    <subcellularLocation>
        <location evidence="1">Cell inner membrane</location>
        <topology evidence="1">Peripheral membrane protein</topology>
    </subcellularLocation>
</comment>
<comment type="similarity">
    <text evidence="1">Belongs to the ABC transporter superfamily. Nickel importer (TC 3.A.1.5.3) family.</text>
</comment>
<feature type="chain" id="PRO_0000260203" description="Nickel import ATP-binding protein NikE">
    <location>
        <begin position="1"/>
        <end position="266"/>
    </location>
</feature>
<feature type="domain" description="ABC transporter" evidence="1">
    <location>
        <begin position="4"/>
        <end position="252"/>
    </location>
</feature>
<feature type="binding site" evidence="1">
    <location>
        <begin position="45"/>
        <end position="52"/>
    </location>
    <ligand>
        <name>ATP</name>
        <dbReference type="ChEBI" id="CHEBI:30616"/>
    </ligand>
</feature>
<proteinExistence type="inferred from homology"/>
<organism>
    <name type="scientific">Brucella abortus biovar 1 (strain 9-941)</name>
    <dbReference type="NCBI Taxonomy" id="262698"/>
    <lineage>
        <taxon>Bacteria</taxon>
        <taxon>Pseudomonadati</taxon>
        <taxon>Pseudomonadota</taxon>
        <taxon>Alphaproteobacteria</taxon>
        <taxon>Hyphomicrobiales</taxon>
        <taxon>Brucellaceae</taxon>
        <taxon>Brucella/Ochrobactrum group</taxon>
        <taxon>Brucella</taxon>
    </lineage>
</organism>
<name>NIKE_BRUAB</name>
<accession>Q578S7</accession>
<dbReference type="EC" id="7.2.2.11" evidence="1"/>
<dbReference type="EMBL" id="AE017224">
    <property type="protein sequence ID" value="AAX75857.1"/>
    <property type="molecule type" value="Genomic_DNA"/>
</dbReference>
<dbReference type="RefSeq" id="WP_002965842.1">
    <property type="nucleotide sequence ID" value="NC_006933.1"/>
</dbReference>
<dbReference type="SMR" id="Q578S7"/>
<dbReference type="EnsemblBacteria" id="AAX75857">
    <property type="protein sequence ID" value="AAX75857"/>
    <property type="gene ID" value="BruAb2_0432"/>
</dbReference>
<dbReference type="GeneID" id="93015643"/>
<dbReference type="KEGG" id="bmb:BruAb2_0432"/>
<dbReference type="HOGENOM" id="CLU_000604_1_23_5"/>
<dbReference type="Proteomes" id="UP000000540">
    <property type="component" value="Chromosome II"/>
</dbReference>
<dbReference type="GO" id="GO:0005886">
    <property type="term" value="C:plasma membrane"/>
    <property type="evidence" value="ECO:0007669"/>
    <property type="project" value="UniProtKB-SubCell"/>
</dbReference>
<dbReference type="GO" id="GO:0015413">
    <property type="term" value="F:ABC-type nickel transporter activity"/>
    <property type="evidence" value="ECO:0007669"/>
    <property type="project" value="UniProtKB-EC"/>
</dbReference>
<dbReference type="GO" id="GO:0005524">
    <property type="term" value="F:ATP binding"/>
    <property type="evidence" value="ECO:0007669"/>
    <property type="project" value="UniProtKB-KW"/>
</dbReference>
<dbReference type="GO" id="GO:0016887">
    <property type="term" value="F:ATP hydrolysis activity"/>
    <property type="evidence" value="ECO:0007669"/>
    <property type="project" value="InterPro"/>
</dbReference>
<dbReference type="GO" id="GO:0016151">
    <property type="term" value="F:nickel cation binding"/>
    <property type="evidence" value="ECO:0007669"/>
    <property type="project" value="InterPro"/>
</dbReference>
<dbReference type="CDD" id="cd03257">
    <property type="entry name" value="ABC_NikE_OppD_transporters"/>
    <property type="match status" value="1"/>
</dbReference>
<dbReference type="Gene3D" id="3.40.50.300">
    <property type="entry name" value="P-loop containing nucleotide triphosphate hydrolases"/>
    <property type="match status" value="1"/>
</dbReference>
<dbReference type="InterPro" id="IPR003593">
    <property type="entry name" value="AAA+_ATPase"/>
</dbReference>
<dbReference type="InterPro" id="IPR050319">
    <property type="entry name" value="ABC_transp_ATP-bind"/>
</dbReference>
<dbReference type="InterPro" id="IPR003439">
    <property type="entry name" value="ABC_transporter-like_ATP-bd"/>
</dbReference>
<dbReference type="InterPro" id="IPR017871">
    <property type="entry name" value="ABC_transporter-like_CS"/>
</dbReference>
<dbReference type="InterPro" id="IPR014137">
    <property type="entry name" value="Nickel_NikE"/>
</dbReference>
<dbReference type="InterPro" id="IPR027417">
    <property type="entry name" value="P-loop_NTPase"/>
</dbReference>
<dbReference type="NCBIfam" id="TIGR02769">
    <property type="entry name" value="nickel_nikE"/>
    <property type="match status" value="1"/>
</dbReference>
<dbReference type="NCBIfam" id="NF007739">
    <property type="entry name" value="PRK10419.1"/>
    <property type="match status" value="1"/>
</dbReference>
<dbReference type="PANTHER" id="PTHR43776:SF7">
    <property type="entry name" value="D,D-DIPEPTIDE TRANSPORT ATP-BINDING PROTEIN DDPF-RELATED"/>
    <property type="match status" value="1"/>
</dbReference>
<dbReference type="PANTHER" id="PTHR43776">
    <property type="entry name" value="TRANSPORT ATP-BINDING PROTEIN"/>
    <property type="match status" value="1"/>
</dbReference>
<dbReference type="Pfam" id="PF00005">
    <property type="entry name" value="ABC_tran"/>
    <property type="match status" value="1"/>
</dbReference>
<dbReference type="SMART" id="SM00382">
    <property type="entry name" value="AAA"/>
    <property type="match status" value="1"/>
</dbReference>
<dbReference type="SUPFAM" id="SSF52540">
    <property type="entry name" value="P-loop containing nucleoside triphosphate hydrolases"/>
    <property type="match status" value="1"/>
</dbReference>
<dbReference type="PROSITE" id="PS00211">
    <property type="entry name" value="ABC_TRANSPORTER_1"/>
    <property type="match status" value="1"/>
</dbReference>
<dbReference type="PROSITE" id="PS50893">
    <property type="entry name" value="ABC_TRANSPORTER_2"/>
    <property type="match status" value="1"/>
</dbReference>
<dbReference type="PROSITE" id="PS51248">
    <property type="entry name" value="NIKE"/>
    <property type="match status" value="1"/>
</dbReference>
<evidence type="ECO:0000255" key="1">
    <source>
        <dbReference type="HAMAP-Rule" id="MF_01712"/>
    </source>
</evidence>
<protein>
    <recommendedName>
        <fullName evidence="1">Nickel import ATP-binding protein NikE</fullName>
        <ecNumber evidence="1">7.2.2.11</ecNumber>
    </recommendedName>
</protein>
<gene>
    <name evidence="1" type="primary">nikE</name>
    <name type="ordered locus">BruAb2_0432</name>
</gene>